<name>IXTPA_BORPA</name>
<organism>
    <name type="scientific">Bordetella parapertussis (strain 12822 / ATCC BAA-587 / NCTC 13253)</name>
    <dbReference type="NCBI Taxonomy" id="257311"/>
    <lineage>
        <taxon>Bacteria</taxon>
        <taxon>Pseudomonadati</taxon>
        <taxon>Pseudomonadota</taxon>
        <taxon>Betaproteobacteria</taxon>
        <taxon>Burkholderiales</taxon>
        <taxon>Alcaligenaceae</taxon>
        <taxon>Bordetella</taxon>
    </lineage>
</organism>
<protein>
    <recommendedName>
        <fullName evidence="1">dITP/XTP pyrophosphatase</fullName>
        <ecNumber evidence="1">3.6.1.66</ecNumber>
    </recommendedName>
    <alternativeName>
        <fullName evidence="1">Non-canonical purine NTP pyrophosphatase</fullName>
    </alternativeName>
    <alternativeName>
        <fullName evidence="1">Non-standard purine NTP pyrophosphatase</fullName>
    </alternativeName>
    <alternativeName>
        <fullName evidence="1">Nucleoside-triphosphate diphosphatase</fullName>
    </alternativeName>
    <alternativeName>
        <fullName evidence="1">Nucleoside-triphosphate pyrophosphatase</fullName>
        <shortName evidence="1">NTPase</shortName>
    </alternativeName>
</protein>
<evidence type="ECO:0000255" key="1">
    <source>
        <dbReference type="HAMAP-Rule" id="MF_01405"/>
    </source>
</evidence>
<evidence type="ECO:0000305" key="2"/>
<accession>Q7W6C6</accession>
<sequence length="213" mass="22532">MSAEILNPNLRRVVLASNNAGKLREFSALFAPLGIELVPQSELGVSEAAEPHATFVENALAKARHASRHTGLPALADDSGLCVVALGGAPGVHSARYAQQPGGARSDAANNALLVRELAAAGDRRAWYVALLALVRTENDPCPLIGEGLWHGEIVDAPAGEHGFGYDPHFYLPQQGCTAAQLAPEHKNRISHRAQALAQLLDKLRATGPVDRP</sequence>
<reference key="1">
    <citation type="journal article" date="2003" name="Nat. Genet.">
        <title>Comparative analysis of the genome sequences of Bordetella pertussis, Bordetella parapertussis and Bordetella bronchiseptica.</title>
        <authorList>
            <person name="Parkhill J."/>
            <person name="Sebaihia M."/>
            <person name="Preston A."/>
            <person name="Murphy L.D."/>
            <person name="Thomson N.R."/>
            <person name="Harris D.E."/>
            <person name="Holden M.T.G."/>
            <person name="Churcher C.M."/>
            <person name="Bentley S.D."/>
            <person name="Mungall K.L."/>
            <person name="Cerdeno-Tarraga A.-M."/>
            <person name="Temple L."/>
            <person name="James K.D."/>
            <person name="Harris B."/>
            <person name="Quail M.A."/>
            <person name="Achtman M."/>
            <person name="Atkin R."/>
            <person name="Baker S."/>
            <person name="Basham D."/>
            <person name="Bason N."/>
            <person name="Cherevach I."/>
            <person name="Chillingworth T."/>
            <person name="Collins M."/>
            <person name="Cronin A."/>
            <person name="Davis P."/>
            <person name="Doggett J."/>
            <person name="Feltwell T."/>
            <person name="Goble A."/>
            <person name="Hamlin N."/>
            <person name="Hauser H."/>
            <person name="Holroyd S."/>
            <person name="Jagels K."/>
            <person name="Leather S."/>
            <person name="Moule S."/>
            <person name="Norberczak H."/>
            <person name="O'Neil S."/>
            <person name="Ormond D."/>
            <person name="Price C."/>
            <person name="Rabbinowitsch E."/>
            <person name="Rutter S."/>
            <person name="Sanders M."/>
            <person name="Saunders D."/>
            <person name="Seeger K."/>
            <person name="Sharp S."/>
            <person name="Simmonds M."/>
            <person name="Skelton J."/>
            <person name="Squares R."/>
            <person name="Squares S."/>
            <person name="Stevens K."/>
            <person name="Unwin L."/>
            <person name="Whitehead S."/>
            <person name="Barrell B.G."/>
            <person name="Maskell D.J."/>
        </authorList>
    </citation>
    <scope>NUCLEOTIDE SEQUENCE [LARGE SCALE GENOMIC DNA]</scope>
    <source>
        <strain>12822 / ATCC BAA-587 / NCTC 13253</strain>
    </source>
</reference>
<keyword id="KW-0378">Hydrolase</keyword>
<keyword id="KW-0460">Magnesium</keyword>
<keyword id="KW-0479">Metal-binding</keyword>
<keyword id="KW-0546">Nucleotide metabolism</keyword>
<keyword id="KW-0547">Nucleotide-binding</keyword>
<comment type="function">
    <text evidence="1">Pyrophosphatase that catalyzes the hydrolysis of nucleoside triphosphates to their monophosphate derivatives, with a high preference for the non-canonical purine nucleotides XTP (xanthosine triphosphate), dITP (deoxyinosine triphosphate) and ITP. Seems to function as a house-cleaning enzyme that removes non-canonical purine nucleotides from the nucleotide pool, thus preventing their incorporation into DNA/RNA and avoiding chromosomal lesions.</text>
</comment>
<comment type="catalytic activity">
    <reaction evidence="1">
        <text>XTP + H2O = XMP + diphosphate + H(+)</text>
        <dbReference type="Rhea" id="RHEA:28610"/>
        <dbReference type="ChEBI" id="CHEBI:15377"/>
        <dbReference type="ChEBI" id="CHEBI:15378"/>
        <dbReference type="ChEBI" id="CHEBI:33019"/>
        <dbReference type="ChEBI" id="CHEBI:57464"/>
        <dbReference type="ChEBI" id="CHEBI:61314"/>
        <dbReference type="EC" id="3.6.1.66"/>
    </reaction>
</comment>
<comment type="catalytic activity">
    <reaction evidence="1">
        <text>dITP + H2O = dIMP + diphosphate + H(+)</text>
        <dbReference type="Rhea" id="RHEA:28342"/>
        <dbReference type="ChEBI" id="CHEBI:15377"/>
        <dbReference type="ChEBI" id="CHEBI:15378"/>
        <dbReference type="ChEBI" id="CHEBI:33019"/>
        <dbReference type="ChEBI" id="CHEBI:61194"/>
        <dbReference type="ChEBI" id="CHEBI:61382"/>
        <dbReference type="EC" id="3.6.1.66"/>
    </reaction>
</comment>
<comment type="catalytic activity">
    <reaction evidence="1">
        <text>ITP + H2O = IMP + diphosphate + H(+)</text>
        <dbReference type="Rhea" id="RHEA:29399"/>
        <dbReference type="ChEBI" id="CHEBI:15377"/>
        <dbReference type="ChEBI" id="CHEBI:15378"/>
        <dbReference type="ChEBI" id="CHEBI:33019"/>
        <dbReference type="ChEBI" id="CHEBI:58053"/>
        <dbReference type="ChEBI" id="CHEBI:61402"/>
        <dbReference type="EC" id="3.6.1.66"/>
    </reaction>
</comment>
<comment type="cofactor">
    <cofactor evidence="1">
        <name>Mg(2+)</name>
        <dbReference type="ChEBI" id="CHEBI:18420"/>
    </cofactor>
    <text evidence="1">Binds 1 Mg(2+) ion per subunit.</text>
</comment>
<comment type="subunit">
    <text evidence="1">Homodimer.</text>
</comment>
<comment type="similarity">
    <text evidence="1">Belongs to the HAM1 NTPase family.</text>
</comment>
<comment type="sequence caution" evidence="2">
    <conflict type="erroneous initiation">
        <sequence resource="EMBL-CDS" id="CAE38280"/>
    </conflict>
</comment>
<gene>
    <name type="ordered locus">BPP2990</name>
</gene>
<feature type="chain" id="PRO_0000178138" description="dITP/XTP pyrophosphatase">
    <location>
        <begin position="1"/>
        <end position="213"/>
    </location>
</feature>
<feature type="active site" description="Proton acceptor" evidence="1">
    <location>
        <position position="78"/>
    </location>
</feature>
<feature type="binding site" evidence="1">
    <location>
        <begin position="17"/>
        <end position="22"/>
    </location>
    <ligand>
        <name>substrate</name>
    </ligand>
</feature>
<feature type="binding site" evidence="1">
    <location>
        <position position="78"/>
    </location>
    <ligand>
        <name>Mg(2+)</name>
        <dbReference type="ChEBI" id="CHEBI:18420"/>
    </ligand>
</feature>
<feature type="binding site" evidence="1">
    <location>
        <position position="79"/>
    </location>
    <ligand>
        <name>substrate</name>
    </ligand>
</feature>
<feature type="binding site" evidence="1">
    <location>
        <begin position="164"/>
        <end position="167"/>
    </location>
    <ligand>
        <name>substrate</name>
    </ligand>
</feature>
<feature type="binding site" evidence="1">
    <location>
        <position position="187"/>
    </location>
    <ligand>
        <name>substrate</name>
    </ligand>
</feature>
<feature type="binding site" evidence="1">
    <location>
        <begin position="192"/>
        <end position="193"/>
    </location>
    <ligand>
        <name>substrate</name>
    </ligand>
</feature>
<dbReference type="EC" id="3.6.1.66" evidence="1"/>
<dbReference type="EMBL" id="BX640432">
    <property type="protein sequence ID" value="CAE38280.1"/>
    <property type="status" value="ALT_INIT"/>
    <property type="molecule type" value="Genomic_DNA"/>
</dbReference>
<dbReference type="SMR" id="Q7W6C6"/>
<dbReference type="KEGG" id="bpa:BPP2990"/>
<dbReference type="HOGENOM" id="CLU_082080_0_3_4"/>
<dbReference type="Proteomes" id="UP000001421">
    <property type="component" value="Chromosome"/>
</dbReference>
<dbReference type="GO" id="GO:0005829">
    <property type="term" value="C:cytosol"/>
    <property type="evidence" value="ECO:0007669"/>
    <property type="project" value="TreeGrafter"/>
</dbReference>
<dbReference type="GO" id="GO:0035870">
    <property type="term" value="F:dITP diphosphatase activity"/>
    <property type="evidence" value="ECO:0007669"/>
    <property type="project" value="RHEA"/>
</dbReference>
<dbReference type="GO" id="GO:0036220">
    <property type="term" value="F:ITP diphosphatase activity"/>
    <property type="evidence" value="ECO:0007669"/>
    <property type="project" value="UniProtKB-EC"/>
</dbReference>
<dbReference type="GO" id="GO:0046872">
    <property type="term" value="F:metal ion binding"/>
    <property type="evidence" value="ECO:0007669"/>
    <property type="project" value="UniProtKB-KW"/>
</dbReference>
<dbReference type="GO" id="GO:0000166">
    <property type="term" value="F:nucleotide binding"/>
    <property type="evidence" value="ECO:0007669"/>
    <property type="project" value="UniProtKB-KW"/>
</dbReference>
<dbReference type="GO" id="GO:0017111">
    <property type="term" value="F:ribonucleoside triphosphate phosphatase activity"/>
    <property type="evidence" value="ECO:0007669"/>
    <property type="project" value="InterPro"/>
</dbReference>
<dbReference type="GO" id="GO:0036222">
    <property type="term" value="F:XTP diphosphatase activity"/>
    <property type="evidence" value="ECO:0007669"/>
    <property type="project" value="RHEA"/>
</dbReference>
<dbReference type="GO" id="GO:0009117">
    <property type="term" value="P:nucleotide metabolic process"/>
    <property type="evidence" value="ECO:0007669"/>
    <property type="project" value="UniProtKB-KW"/>
</dbReference>
<dbReference type="GO" id="GO:0009146">
    <property type="term" value="P:purine nucleoside triphosphate catabolic process"/>
    <property type="evidence" value="ECO:0007669"/>
    <property type="project" value="UniProtKB-UniRule"/>
</dbReference>
<dbReference type="CDD" id="cd00515">
    <property type="entry name" value="HAM1"/>
    <property type="match status" value="1"/>
</dbReference>
<dbReference type="FunFam" id="3.90.950.10:FF:000001">
    <property type="entry name" value="dITP/XTP pyrophosphatase"/>
    <property type="match status" value="1"/>
</dbReference>
<dbReference type="Gene3D" id="3.90.950.10">
    <property type="match status" value="1"/>
</dbReference>
<dbReference type="HAMAP" id="MF_01405">
    <property type="entry name" value="Non_canon_purine_NTPase"/>
    <property type="match status" value="1"/>
</dbReference>
<dbReference type="InterPro" id="IPR020922">
    <property type="entry name" value="dITP/XTP_pyrophosphatase"/>
</dbReference>
<dbReference type="InterPro" id="IPR029001">
    <property type="entry name" value="ITPase-like_fam"/>
</dbReference>
<dbReference type="InterPro" id="IPR002637">
    <property type="entry name" value="RdgB/HAM1"/>
</dbReference>
<dbReference type="NCBIfam" id="TIGR00042">
    <property type="entry name" value="RdgB/HAM1 family non-canonical purine NTP pyrophosphatase"/>
    <property type="match status" value="1"/>
</dbReference>
<dbReference type="PANTHER" id="PTHR11067:SF9">
    <property type="entry name" value="INOSINE TRIPHOSPHATE PYROPHOSPHATASE"/>
    <property type="match status" value="1"/>
</dbReference>
<dbReference type="PANTHER" id="PTHR11067">
    <property type="entry name" value="INOSINE TRIPHOSPHATE PYROPHOSPHATASE/HAM1 PROTEIN"/>
    <property type="match status" value="1"/>
</dbReference>
<dbReference type="Pfam" id="PF01725">
    <property type="entry name" value="Ham1p_like"/>
    <property type="match status" value="1"/>
</dbReference>
<dbReference type="SUPFAM" id="SSF52972">
    <property type="entry name" value="ITPase-like"/>
    <property type="match status" value="1"/>
</dbReference>
<proteinExistence type="inferred from homology"/>